<evidence type="ECO:0000255" key="1">
    <source>
        <dbReference type="HAMAP-Rule" id="MF_01254"/>
    </source>
</evidence>
<protein>
    <recommendedName>
        <fullName evidence="1">L-fucose isomerase</fullName>
        <ecNumber evidence="1">5.3.1.25</ecNumber>
    </recommendedName>
    <alternativeName>
        <fullName evidence="1">6-deoxy-L-galactose isomerase</fullName>
    </alternativeName>
    <alternativeName>
        <fullName>FucIase</fullName>
    </alternativeName>
</protein>
<proteinExistence type="inferred from homology"/>
<name>FUCI_ECO5E</name>
<comment type="function">
    <text evidence="1">Converts the aldose L-fucose into the corresponding ketose L-fuculose.</text>
</comment>
<comment type="catalytic activity">
    <reaction evidence="1">
        <text>L-fucose = L-fuculose</text>
        <dbReference type="Rhea" id="RHEA:17233"/>
        <dbReference type="ChEBI" id="CHEBI:2181"/>
        <dbReference type="ChEBI" id="CHEBI:17617"/>
        <dbReference type="EC" id="5.3.1.25"/>
    </reaction>
</comment>
<comment type="cofactor">
    <cofactor evidence="1">
        <name>Mn(2+)</name>
        <dbReference type="ChEBI" id="CHEBI:29035"/>
    </cofactor>
</comment>
<comment type="pathway">
    <text evidence="1">Carbohydrate degradation; L-fucose degradation; L-lactaldehyde and glycerone phosphate from L-fucose: step 1/3.</text>
</comment>
<comment type="subunit">
    <text evidence="1">Homohexamer.</text>
</comment>
<comment type="subcellular location">
    <subcellularLocation>
        <location evidence="1">Cytoplasm</location>
    </subcellularLocation>
</comment>
<comment type="similarity">
    <text evidence="1">Belongs to the L-fucose isomerase family.</text>
</comment>
<dbReference type="EC" id="5.3.1.25" evidence="1"/>
<dbReference type="EMBL" id="CP001164">
    <property type="protein sequence ID" value="ACI38765.1"/>
    <property type="molecule type" value="Genomic_DNA"/>
</dbReference>
<dbReference type="RefSeq" id="WP_001033899.1">
    <property type="nucleotide sequence ID" value="NC_011353.1"/>
</dbReference>
<dbReference type="SMR" id="B5Z4C2"/>
<dbReference type="KEGG" id="ecf:ECH74115_4066"/>
<dbReference type="HOGENOM" id="CLU_033326_1_0_6"/>
<dbReference type="UniPathway" id="UPA00563">
    <property type="reaction ID" value="UER00624"/>
</dbReference>
<dbReference type="GO" id="GO:0005737">
    <property type="term" value="C:cytoplasm"/>
    <property type="evidence" value="ECO:0007669"/>
    <property type="project" value="UniProtKB-SubCell"/>
</dbReference>
<dbReference type="GO" id="GO:0008790">
    <property type="term" value="F:arabinose isomerase activity"/>
    <property type="evidence" value="ECO:0007669"/>
    <property type="project" value="TreeGrafter"/>
</dbReference>
<dbReference type="GO" id="GO:0008736">
    <property type="term" value="F:L-fucose isomerase activity"/>
    <property type="evidence" value="ECO:0007669"/>
    <property type="project" value="UniProtKB-UniRule"/>
</dbReference>
<dbReference type="GO" id="GO:0030145">
    <property type="term" value="F:manganese ion binding"/>
    <property type="evidence" value="ECO:0007669"/>
    <property type="project" value="UniProtKB-UniRule"/>
</dbReference>
<dbReference type="GO" id="GO:0019571">
    <property type="term" value="P:D-arabinose catabolic process"/>
    <property type="evidence" value="ECO:0007669"/>
    <property type="project" value="TreeGrafter"/>
</dbReference>
<dbReference type="GO" id="GO:0042355">
    <property type="term" value="P:L-fucose catabolic process"/>
    <property type="evidence" value="ECO:0007669"/>
    <property type="project" value="UniProtKB-UniRule"/>
</dbReference>
<dbReference type="CDD" id="cd03556">
    <property type="entry name" value="L-fucose_isomerase"/>
    <property type="match status" value="1"/>
</dbReference>
<dbReference type="FunFam" id="3.20.14.10:FF:000001">
    <property type="entry name" value="L-fucose isomerase"/>
    <property type="match status" value="1"/>
</dbReference>
<dbReference type="FunFam" id="3.40.275.10:FF:000001">
    <property type="entry name" value="L-fucose isomerase"/>
    <property type="match status" value="1"/>
</dbReference>
<dbReference type="FunFam" id="3.40.50.1070:FF:000001">
    <property type="entry name" value="L-fucose isomerase"/>
    <property type="match status" value="1"/>
</dbReference>
<dbReference type="Gene3D" id="3.40.50.1070">
    <property type="match status" value="1"/>
</dbReference>
<dbReference type="Gene3D" id="3.40.275.10">
    <property type="entry name" value="L-fucose Isomerase, Chain A, domain 2"/>
    <property type="match status" value="1"/>
</dbReference>
<dbReference type="Gene3D" id="3.20.14.10">
    <property type="entry name" value="L-fucose/L-arabinose isomerase, C-terminal"/>
    <property type="match status" value="1"/>
</dbReference>
<dbReference type="HAMAP" id="MF_01254">
    <property type="entry name" value="Fucose_iso"/>
    <property type="match status" value="1"/>
</dbReference>
<dbReference type="InterPro" id="IPR004216">
    <property type="entry name" value="Fuc/Ara_isomerase_C"/>
</dbReference>
<dbReference type="InterPro" id="IPR038393">
    <property type="entry name" value="Fuc_iso_dom3_sf"/>
</dbReference>
<dbReference type="InterPro" id="IPR015888">
    <property type="entry name" value="Fuc_isomerase_C"/>
</dbReference>
<dbReference type="InterPro" id="IPR038391">
    <property type="entry name" value="Fucose_iso_dom1_sf"/>
</dbReference>
<dbReference type="InterPro" id="IPR012888">
    <property type="entry name" value="Fucose_iso_N1"/>
</dbReference>
<dbReference type="InterPro" id="IPR005763">
    <property type="entry name" value="Fucose_isomerase"/>
</dbReference>
<dbReference type="InterPro" id="IPR038392">
    <property type="entry name" value="Fucose_isomerase_dom2_sf"/>
</dbReference>
<dbReference type="InterPro" id="IPR009015">
    <property type="entry name" value="Fucose_isomerase_N/cen_sf"/>
</dbReference>
<dbReference type="InterPro" id="IPR012889">
    <property type="entry name" value="Fucose_isomerase_N2"/>
</dbReference>
<dbReference type="NCBIfam" id="TIGR01089">
    <property type="entry name" value="fucI"/>
    <property type="match status" value="1"/>
</dbReference>
<dbReference type="NCBIfam" id="NF008220">
    <property type="entry name" value="PRK10991.1"/>
    <property type="match status" value="1"/>
</dbReference>
<dbReference type="PANTHER" id="PTHR37840">
    <property type="entry name" value="L-FUCOSE ISOMERASE"/>
    <property type="match status" value="1"/>
</dbReference>
<dbReference type="PANTHER" id="PTHR37840:SF1">
    <property type="entry name" value="L-FUCOSE ISOMERASE"/>
    <property type="match status" value="1"/>
</dbReference>
<dbReference type="Pfam" id="PF02952">
    <property type="entry name" value="Fucose_iso_C"/>
    <property type="match status" value="1"/>
</dbReference>
<dbReference type="Pfam" id="PF07881">
    <property type="entry name" value="Fucose_iso_N1"/>
    <property type="match status" value="1"/>
</dbReference>
<dbReference type="Pfam" id="PF07882">
    <property type="entry name" value="Fucose_iso_N2"/>
    <property type="match status" value="1"/>
</dbReference>
<dbReference type="SUPFAM" id="SSF50443">
    <property type="entry name" value="FucI/AraA C-terminal domain-like"/>
    <property type="match status" value="1"/>
</dbReference>
<dbReference type="SUPFAM" id="SSF53743">
    <property type="entry name" value="FucI/AraA N-terminal and middle domains"/>
    <property type="match status" value="1"/>
</dbReference>
<accession>B5Z4C2</accession>
<sequence length="591" mass="64963">MNKISLPKIGIRPVIDGRRMGVRESLEEQTMNMAKATAALLTEKLRHACGAAVECVISDTCIAGMAEAAACEEKFSSQNVGLTITVTPCWCYGSETIDMDPTRPKAIWGFNGTERPGAVYLAAALAAHSQKGIPAFSIYGHDVQDADDTSIPADVEEKLLRFARAGLAVASMKGKSYLSLGGVSMGIAGSIVDHNFFESWLGMKVQAVDMTELRRRIDQKIYDEAELEMALAWADKNFRYGEDENNKQYQRNAEQSRAVLRESLLMAMCIRDMMQGNSKLADIGRVEESLGYNAIAAGFQGQRHWTDQYPNGDTAEAILNSSFDWNGVREPFVVATENDSLNGVAMLMGHQLTGTAQVFADVRTYWSPEAIERVTGHKLDGLAEHGIIHLINSGSAALDGSCKQRDSEGNPTMKPHWEISQQEADACLAATEWCPAIHEYFRGGGYSSRFLTEGGVPFTMTRVNIIKGLGPVLQIAEGWSVELPKDVHDILNKRTNSTWPTTWFAPRLTGKGPFTDVYSVMANWGANHGVLTIGHVGADFITLASMLRIPVCMHNVEETKVYRPSAWAAHGMDIEGQDYRACQNYGPLYKR</sequence>
<reference key="1">
    <citation type="journal article" date="2011" name="Proc. Natl. Acad. Sci. U.S.A.">
        <title>Genomic anatomy of Escherichia coli O157:H7 outbreaks.</title>
        <authorList>
            <person name="Eppinger M."/>
            <person name="Mammel M.K."/>
            <person name="Leclerc J.E."/>
            <person name="Ravel J."/>
            <person name="Cebula T.A."/>
        </authorList>
    </citation>
    <scope>NUCLEOTIDE SEQUENCE [LARGE SCALE GENOMIC DNA]</scope>
    <source>
        <strain>EC4115 / EHEC</strain>
    </source>
</reference>
<organism>
    <name type="scientific">Escherichia coli O157:H7 (strain EC4115 / EHEC)</name>
    <dbReference type="NCBI Taxonomy" id="444450"/>
    <lineage>
        <taxon>Bacteria</taxon>
        <taxon>Pseudomonadati</taxon>
        <taxon>Pseudomonadota</taxon>
        <taxon>Gammaproteobacteria</taxon>
        <taxon>Enterobacterales</taxon>
        <taxon>Enterobacteriaceae</taxon>
        <taxon>Escherichia</taxon>
    </lineage>
</organism>
<gene>
    <name evidence="1" type="primary">fucI</name>
    <name type="ordered locus">ECH74115_4066</name>
</gene>
<keyword id="KW-0119">Carbohydrate metabolism</keyword>
<keyword id="KW-0963">Cytoplasm</keyword>
<keyword id="KW-0294">Fucose metabolism</keyword>
<keyword id="KW-0413">Isomerase</keyword>
<keyword id="KW-0464">Manganese</keyword>
<keyword id="KW-0479">Metal-binding</keyword>
<feature type="chain" id="PRO_1000139949" description="L-fucose isomerase">
    <location>
        <begin position="1"/>
        <end position="591"/>
    </location>
</feature>
<feature type="active site" description="Proton acceptor" evidence="1">
    <location>
        <position position="337"/>
    </location>
</feature>
<feature type="active site" description="Proton acceptor" evidence="1">
    <location>
        <position position="361"/>
    </location>
</feature>
<feature type="binding site" evidence="1">
    <location>
        <position position="337"/>
    </location>
    <ligand>
        <name>Mn(2+)</name>
        <dbReference type="ChEBI" id="CHEBI:29035"/>
    </ligand>
</feature>
<feature type="binding site" evidence="1">
    <location>
        <position position="361"/>
    </location>
    <ligand>
        <name>Mn(2+)</name>
        <dbReference type="ChEBI" id="CHEBI:29035"/>
    </ligand>
</feature>
<feature type="binding site" evidence="1">
    <location>
        <position position="528"/>
    </location>
    <ligand>
        <name>Mn(2+)</name>
        <dbReference type="ChEBI" id="CHEBI:29035"/>
    </ligand>
</feature>